<feature type="signal peptide">
    <location>
        <begin position="1"/>
        <end position="17"/>
    </location>
</feature>
<feature type="chain" id="PRO_0000018681" description="Microfibrillar-associated protein 2">
    <location>
        <begin position="18"/>
        <end position="183"/>
    </location>
</feature>
<feature type="domain" description="ShKT" evidence="1">
    <location>
        <begin position="153"/>
        <end position="183"/>
    </location>
</feature>
<feature type="modified residue" description="Pyrrolidone carboxylic acid" evidence="5">
    <location>
        <position position="18"/>
    </location>
</feature>
<feature type="modified residue" description="Sulfotyrosine" evidence="7">
    <location>
        <position position="47"/>
    </location>
</feature>
<feature type="modified residue" description="Sulfotyrosine" evidence="7">
    <location>
        <position position="48"/>
    </location>
</feature>
<feature type="modified residue" description="Sulfotyrosine" evidence="7">
    <location>
        <position position="50"/>
    </location>
</feature>
<feature type="disulfide bond" evidence="1">
    <location>
        <begin position="153"/>
        <end position="183"/>
    </location>
</feature>
<feature type="disulfide bond" evidence="1">
    <location>
        <begin position="160"/>
        <end position="176"/>
    </location>
</feature>
<feature type="disulfide bond" evidence="1">
    <location>
        <begin position="169"/>
        <end position="180"/>
    </location>
</feature>
<feature type="cross-link" description="Isoglutamyl lysine isopeptide (Gln-Lys) (interchain with K-?)" evidence="2">
    <location>
        <position position="20"/>
    </location>
</feature>
<feature type="mutagenesis site" description="Completely abolishes transglutamination." evidence="2">
    <original>Q</original>
    <variation>N</variation>
    <location>
        <position position="20"/>
    </location>
</feature>
<feature type="mutagenesis site" description="Some decrease in transglutamination." evidence="2">
    <original>Q</original>
    <variation>N</variation>
    <location>
        <position position="34"/>
    </location>
</feature>
<feature type="mutagenesis site" description="Little effect on transglutamination." evidence="2">
    <original>Q</original>
    <variation>N</variation>
    <location>
        <position position="41"/>
    </location>
</feature>
<feature type="mutagenesis site" description="Loss of sulfation; when associated with S-48 and S-50." evidence="2">
    <original>Y</original>
    <variation>S</variation>
    <location>
        <position position="47"/>
    </location>
</feature>
<feature type="mutagenesis site" description="Loss of sulfation; when associated with S-47 and S-50." evidence="2">
    <original>Y</original>
    <variation>S</variation>
    <location>
        <position position="48"/>
    </location>
</feature>
<feature type="mutagenesis site" description="Loss of sulfation; when associated with S-47 and S-48." evidence="2">
    <original>Y</original>
    <variation>S</variation>
    <location>
        <position position="50"/>
    </location>
</feature>
<feature type="mutagenesis site" description="No change in glycosylation levels." evidence="2">
    <original>T</original>
    <variation>V</variation>
    <location>
        <position position="54"/>
    </location>
</feature>
<feature type="mutagenesis site" description="No change in glycosylation levels." evidence="2">
    <original>T</original>
    <variation>V</variation>
    <location>
        <position position="79"/>
    </location>
</feature>
<feature type="mutagenesis site" description="No change in glycosylation levels." evidence="2">
    <original>T</original>
    <variation>V</variation>
    <location>
        <position position="90"/>
    </location>
</feature>
<name>MFAP2_BOVIN</name>
<evidence type="ECO:0000255" key="1">
    <source>
        <dbReference type="PROSITE-ProRule" id="PRU01005"/>
    </source>
</evidence>
<evidence type="ECO:0000269" key="2">
    <source>
    </source>
</evidence>
<evidence type="ECO:0000269" key="3">
    <source>
    </source>
</evidence>
<evidence type="ECO:0000269" key="4">
    <source>
    </source>
</evidence>
<evidence type="ECO:0000269" key="5">
    <source>
    </source>
</evidence>
<evidence type="ECO:0000305" key="6"/>
<evidence type="ECO:0000305" key="7">
    <source>
    </source>
</evidence>
<reference key="1">
    <citation type="journal article" date="1991" name="J. Biol. Chem.">
        <title>Complementary DNA cloning establishes microfibril-associated glycoprotein (MAGP) to be a discrete component of the elastin-associated microfibrils.</title>
        <authorList>
            <person name="Gibson M.A."/>
            <person name="Sandberg L.B."/>
            <person name="Grosso L.E."/>
            <person name="Cleary E.G."/>
        </authorList>
    </citation>
    <scope>NUCLEOTIDE SEQUENCE [MRNA]</scope>
    <scope>PARTIAL PROTEIN SEQUENCE</scope>
    <source>
        <tissue>Nuchal ligament</tissue>
    </source>
</reference>
<reference key="2">
    <citation type="journal article" date="1994" name="Biochemistry">
        <title>Microfibril-associated glycoprotein: characterization of the bovine gene and of the recombinantly expressed protein.</title>
        <authorList>
            <person name="Bashir M.M."/>
            <person name="Abrams W.R."/>
            <person name="Rosenbloom J."/>
            <person name="Kucich U."/>
            <person name="Bacarra M."/>
            <person name="Han M.D."/>
            <person name="Brown-Augsberger P."/>
            <person name="Mecham R.P."/>
            <person name="Rosenbloom J."/>
        </authorList>
    </citation>
    <scope>NUCLEOTIDE SEQUENCE [MRNA]</scope>
    <scope>AMINO-ACID COMPOSITION</scope>
    <scope>PYROGLUTAMATE FORMATION AT GLN-18</scope>
</reference>
<reference key="3">
    <citation type="journal article" date="1986" name="J. Biol. Chem.">
        <title>The major antigen of elastin-associated microfibrils is a 31-kDa glycoprotein.</title>
        <authorList>
            <person name="Gibson M.A."/>
            <person name="Hughes J.L."/>
            <person name="Fanning J.C."/>
            <person name="Cleary E.G."/>
        </authorList>
    </citation>
    <scope>STRUCTURE OF CARBOHYDRATES</scope>
</reference>
<reference key="4">
    <citation type="journal article" date="2002" name="J. Biol. Chem.">
        <title>Molecular interactions of biglycan and decorin with elastic fiber components: biglycan forms a ternary complex with tropoelastin and microfibril-associated glycoprotein 1.</title>
        <authorList>
            <person name="Reinboth B."/>
            <person name="Hanssen E."/>
            <person name="Cleary E.G."/>
            <person name="Gibson M.A."/>
        </authorList>
    </citation>
    <scope>INTERACTION WITH BGN AND ELN</scope>
</reference>
<reference key="5">
    <citation type="journal article" date="2001" name="Biochemistry">
        <title>Posttranslational modifications of microfibril associated glycoprotein-1 (MAGP-1).</title>
        <authorList>
            <person name="Trask B.C."/>
            <person name="Broekelmann T."/>
            <person name="Ritty T.M."/>
            <person name="Trask T.M."/>
            <person name="Tisdale C."/>
            <person name="Mecham R.P."/>
        </authorList>
    </citation>
    <scope>GLYCOSYLATION</scope>
    <scope>SULFATION AT TYR-47; TYR-48 AND TYR-50</scope>
    <scope>TRANSGLUTAMINATION AT GLN-20</scope>
    <scope>MUTAGENESIS OF GLN-20; GLN-34; GLN-41; TYR-47; TYR-48; TYR-50; THR-54; THR-79 AND THR-90</scope>
</reference>
<reference key="6">
    <citation type="journal article" date="2004" name="J. Biol. Chem.">
        <title>MAGP-2 has multiple binding regions on fibrillins and has covalent periodic association with fibrillin-containing microfibrils.</title>
        <authorList>
            <person name="Hanssen E."/>
            <person name="Hew F.H."/>
            <person name="Moore E."/>
            <person name="Gibson M.A."/>
        </authorList>
    </citation>
    <scope>INTERACTION WITH FBN1 AND FBN2</scope>
</reference>
<keyword id="KW-0903">Direct protein sequencing</keyword>
<keyword id="KW-1015">Disulfide bond</keyword>
<keyword id="KW-0272">Extracellular matrix</keyword>
<keyword id="KW-0325">Glycoprotein</keyword>
<keyword id="KW-1017">Isopeptide bond</keyword>
<keyword id="KW-0873">Pyrrolidone carboxylic acid</keyword>
<keyword id="KW-1185">Reference proteome</keyword>
<keyword id="KW-0964">Secreted</keyword>
<keyword id="KW-0732">Signal</keyword>
<keyword id="KW-0765">Sulfation</keyword>
<protein>
    <recommendedName>
        <fullName>Microfibrillar-associated protein 2</fullName>
        <shortName>MFAP-2</shortName>
    </recommendedName>
    <alternativeName>
        <fullName>Microfibril-associated glycoprotein 1</fullName>
        <shortName>MAGP</shortName>
        <shortName>MAGP-1</shortName>
    </alternativeName>
    <alternativeName>
        <fullName>Tropoelastin-binding protein</fullName>
    </alternativeName>
</protein>
<dbReference type="EMBL" id="M59851">
    <property type="protein sequence ID" value="AAA62715.1"/>
    <property type="molecule type" value="mRNA"/>
</dbReference>
<dbReference type="EMBL" id="S68064">
    <property type="protein sequence ID" value="AAB29686.1"/>
    <property type="molecule type" value="mRNA"/>
</dbReference>
<dbReference type="PIR" id="A54151">
    <property type="entry name" value="A54151"/>
</dbReference>
<dbReference type="RefSeq" id="NP_776813.1">
    <property type="nucleotide sequence ID" value="NM_174388.2"/>
</dbReference>
<dbReference type="CORUM" id="P27424"/>
<dbReference type="FunCoup" id="P27424">
    <property type="interactions" value="200"/>
</dbReference>
<dbReference type="STRING" id="9913.ENSBTAP00000060508"/>
<dbReference type="GlyConnect" id="368">
    <property type="glycosylation" value="1 O-Linked glycan"/>
</dbReference>
<dbReference type="GlyCosmos" id="P27424">
    <property type="glycosylation" value="No site information, 2 glycans"/>
</dbReference>
<dbReference type="GlyGen" id="P27424">
    <property type="glycosylation" value="1 site, 2 O-linked glycans (1 site)"/>
</dbReference>
<dbReference type="PaxDb" id="9913-ENSBTAP00000004994"/>
<dbReference type="GeneID" id="281912"/>
<dbReference type="KEGG" id="bta:281912"/>
<dbReference type="CTD" id="4237"/>
<dbReference type="eggNOG" id="ENOG502RXC2">
    <property type="taxonomic scope" value="Eukaryota"/>
</dbReference>
<dbReference type="InParanoid" id="P27424"/>
<dbReference type="OrthoDB" id="9947781at2759"/>
<dbReference type="Proteomes" id="UP000009136">
    <property type="component" value="Unplaced"/>
</dbReference>
<dbReference type="GO" id="GO:0005576">
    <property type="term" value="C:extracellular region"/>
    <property type="evidence" value="ECO:0007669"/>
    <property type="project" value="UniProtKB-KW"/>
</dbReference>
<dbReference type="GO" id="GO:0001527">
    <property type="term" value="C:microfibril"/>
    <property type="evidence" value="ECO:0000318"/>
    <property type="project" value="GO_Central"/>
</dbReference>
<dbReference type="GO" id="GO:0048048">
    <property type="term" value="P:embryonic eye morphogenesis"/>
    <property type="evidence" value="ECO:0000318"/>
    <property type="project" value="GO_Central"/>
</dbReference>
<dbReference type="InterPro" id="IPR008673">
    <property type="entry name" value="MAGP"/>
</dbReference>
<dbReference type="InterPro" id="IPR003582">
    <property type="entry name" value="ShKT_dom"/>
</dbReference>
<dbReference type="PANTHER" id="PTHR16485">
    <property type="entry name" value="MICROFIBRILLAR-ASSOCIATED PROTEIN 2"/>
    <property type="match status" value="1"/>
</dbReference>
<dbReference type="PANTHER" id="PTHR16485:SF3">
    <property type="entry name" value="MICROFIBRILLAR-ASSOCIATED PROTEIN 2"/>
    <property type="match status" value="1"/>
</dbReference>
<dbReference type="Pfam" id="PF05507">
    <property type="entry name" value="MAGP"/>
    <property type="match status" value="1"/>
</dbReference>
<dbReference type="PROSITE" id="PS51670">
    <property type="entry name" value="SHKT"/>
    <property type="match status" value="1"/>
</dbReference>
<accession>P27424</accession>
<comment type="function">
    <text>Component of the elastin-associated microfibrils.</text>
</comment>
<comment type="subunit">
    <text evidence="3 4">Forms a ternary complex with BGN and ELN (PubMed:11723132). Interacts with FBN1 (via N-terminal domain) and FBN2 (PubMed:15131124).</text>
</comment>
<comment type="subcellular location">
    <subcellularLocation>
        <location>Secreted</location>
        <location>Extracellular space</location>
        <location>Extracellular matrix</location>
    </subcellularLocation>
</comment>
<comment type="PTM">
    <text evidence="2">O-glycosylated; glycans consist of Gal(beta1-3)GalNAc.</text>
</comment>
<comment type="PTM">
    <text>Forms intermolecular disulfide bonds either with other MAGP-1 molecules or with other components of the microfibrils.</text>
</comment>
<comment type="PTM">
    <text evidence="2">Forms transglutaminase cross-links with tropoelastin.</text>
</comment>
<comment type="similarity">
    <text evidence="6">Belongs to the MFAP family.</text>
</comment>
<organism>
    <name type="scientific">Bos taurus</name>
    <name type="common">Bovine</name>
    <dbReference type="NCBI Taxonomy" id="9913"/>
    <lineage>
        <taxon>Eukaryota</taxon>
        <taxon>Metazoa</taxon>
        <taxon>Chordata</taxon>
        <taxon>Craniata</taxon>
        <taxon>Vertebrata</taxon>
        <taxon>Euteleostomi</taxon>
        <taxon>Mammalia</taxon>
        <taxon>Eutheria</taxon>
        <taxon>Laurasiatheria</taxon>
        <taxon>Artiodactyla</taxon>
        <taxon>Ruminantia</taxon>
        <taxon>Pecora</taxon>
        <taxon>Bovidae</taxon>
        <taxon>Bovinae</taxon>
        <taxon>Bos</taxon>
    </lineage>
</organism>
<gene>
    <name type="primary">MFAP2</name>
    <name type="synonym">MAGP</name>
    <name type="synonym">MAGP1</name>
</gene>
<proteinExistence type="evidence at protein level"/>
<sequence length="183" mass="20709">MRAASLFLLFLPAGLLAQGQYDLDPLPPYPDHVQYTHYSEQIENPDYYDYPEMTPRPPEEQFQFQSQQQVQQEVIPAPTLEPGTVETEPTEPGPLDCREEQYPCTRLYSIHKPCKQCLNEVCFYSLRRVYVVNKEICVRTVCAQEELLRADLCRDKFSKCGVLASSGLCQSVAAACARSCGGC</sequence>